<dbReference type="EMBL" id="AF336133">
    <property type="protein sequence ID" value="AAK15343.1"/>
    <property type="molecule type" value="mRNA"/>
</dbReference>
<dbReference type="EMBL" id="AC004019">
    <property type="status" value="NOT_ANNOTATED_CDS"/>
    <property type="molecule type" value="Genomic_DNA"/>
</dbReference>
<dbReference type="EMBL" id="CH471193">
    <property type="protein sequence ID" value="EAW57756.1"/>
    <property type="status" value="ALT_INIT"/>
    <property type="molecule type" value="Genomic_DNA"/>
</dbReference>
<dbReference type="EMBL" id="BX647449">
    <property type="protein sequence ID" value="CAH56122.1"/>
    <property type="status" value="ALT_INIT"/>
    <property type="molecule type" value="mRNA"/>
</dbReference>
<dbReference type="EMBL" id="AL832377">
    <property type="protein sequence ID" value="CAH56212.1"/>
    <property type="status" value="ALT_INIT"/>
    <property type="molecule type" value="mRNA"/>
</dbReference>
<dbReference type="EMBL" id="AB051527">
    <property type="protein sequence ID" value="BAB21831.1"/>
    <property type="molecule type" value="mRNA"/>
</dbReference>
<dbReference type="EMBL" id="AF411609">
    <property type="protein sequence ID" value="AAL07393.1"/>
    <property type="molecule type" value="mRNA"/>
</dbReference>
<dbReference type="CCDS" id="CCDS93111.1">
    <molecule id="Q9BXF3-3"/>
</dbReference>
<dbReference type="RefSeq" id="NP_001276975.1">
    <property type="nucleotide sequence ID" value="NM_001290046.1"/>
</dbReference>
<dbReference type="RefSeq" id="NP_001276976.1">
    <molecule id="Q9BXF3-3"/>
    <property type="nucleotide sequence ID" value="NM_001290047.2"/>
</dbReference>
<dbReference type="PDB" id="3NXB">
    <property type="method" value="X-ray"/>
    <property type="resolution" value="1.83 A"/>
    <property type="chains" value="A/B=424-538"/>
</dbReference>
<dbReference type="PDB" id="5V84">
    <property type="method" value="X-ray"/>
    <property type="resolution" value="2.70 A"/>
    <property type="chains" value="A/B/C/D=424-538"/>
</dbReference>
<dbReference type="PDB" id="8RU1">
    <property type="method" value="X-ray"/>
    <property type="resolution" value="1.66 A"/>
    <property type="chains" value="A/B/C/D=430-543"/>
</dbReference>
<dbReference type="PDBsum" id="3NXB"/>
<dbReference type="PDBsum" id="5V84"/>
<dbReference type="PDBsum" id="8RU1"/>
<dbReference type="SMR" id="Q9BXF3"/>
<dbReference type="BioGRID" id="118176">
    <property type="interactions" value="45"/>
</dbReference>
<dbReference type="ComplexPortal" id="CPX-25738">
    <property type="entry name" value="CERF chromatin remodelling complex, SMARCA5 variant"/>
</dbReference>
<dbReference type="ComplexPortal" id="CPX-446">
    <property type="entry name" value="CERF chromatin remodelling complex, SMARCA1 variant"/>
</dbReference>
<dbReference type="CORUM" id="Q9BXF3"/>
<dbReference type="FunCoup" id="Q9BXF3">
    <property type="interactions" value="1401"/>
</dbReference>
<dbReference type="IntAct" id="Q9BXF3">
    <property type="interactions" value="8"/>
</dbReference>
<dbReference type="STRING" id="9606.ENSP00000383428"/>
<dbReference type="BindingDB" id="Q9BXF3"/>
<dbReference type="ChEMBL" id="CHEMBL3108639"/>
<dbReference type="GuidetoPHARMACOLOGY" id="2733"/>
<dbReference type="GlyGen" id="Q9BXF3">
    <property type="glycosylation" value="1 site"/>
</dbReference>
<dbReference type="iPTMnet" id="Q9BXF3"/>
<dbReference type="PhosphoSitePlus" id="Q9BXF3"/>
<dbReference type="BioMuta" id="CECR2"/>
<dbReference type="DMDM" id="114152782"/>
<dbReference type="jPOST" id="Q9BXF3"/>
<dbReference type="MassIVE" id="Q9BXF3"/>
<dbReference type="PaxDb" id="9606-ENSP00000341219"/>
<dbReference type="PeptideAtlas" id="Q9BXF3"/>
<dbReference type="ProteomicsDB" id="79417">
    <molecule id="Q9BXF3-1"/>
</dbReference>
<dbReference type="ProteomicsDB" id="79418">
    <molecule id="Q9BXF3-2"/>
</dbReference>
<dbReference type="ProteomicsDB" id="79419">
    <molecule id="Q9BXF3-3"/>
</dbReference>
<dbReference type="Pumba" id="Q9BXF3"/>
<dbReference type="ABCD" id="Q9BXF3">
    <property type="antibodies" value="1 sequenced antibody"/>
</dbReference>
<dbReference type="Antibodypedia" id="283">
    <property type="antibodies" value="65 antibodies from 22 providers"/>
</dbReference>
<dbReference type="DNASU" id="27443"/>
<dbReference type="Ensembl" id="ENST00000262608.13">
    <molecule id="Q9BXF3-3"/>
    <property type="protein sequence ID" value="ENSP00000262608.11"/>
    <property type="gene ID" value="ENSG00000099954.19"/>
</dbReference>
<dbReference type="Ensembl" id="ENST00000342247.10">
    <molecule id="Q9BXF3-1"/>
    <property type="protein sequence ID" value="ENSP00000341219.6"/>
    <property type="gene ID" value="ENSG00000099954.19"/>
</dbReference>
<dbReference type="GeneID" id="27443"/>
<dbReference type="KEGG" id="hsa:27443"/>
<dbReference type="MANE-Select" id="ENST00000262608.13">
    <molecule id="Q9BXF3-3"/>
    <property type="protein sequence ID" value="ENSP00000262608.11"/>
    <property type="RefSeq nucleotide sequence ID" value="NM_001290047.2"/>
    <property type="RefSeq protein sequence ID" value="NP_001276976.1"/>
</dbReference>
<dbReference type="UCSC" id="uc062bgi.1">
    <molecule id="Q9BXF3-1"/>
    <property type="organism name" value="human"/>
</dbReference>
<dbReference type="AGR" id="HGNC:1840"/>
<dbReference type="CTD" id="27443"/>
<dbReference type="DisGeNET" id="27443"/>
<dbReference type="GeneCards" id="CECR2"/>
<dbReference type="HGNC" id="HGNC:1840">
    <property type="gene designation" value="CECR2"/>
</dbReference>
<dbReference type="HPA" id="ENSG00000099954">
    <property type="expression patterns" value="Tissue enhanced (brain, retina, skeletal muscle)"/>
</dbReference>
<dbReference type="MIM" id="607576">
    <property type="type" value="gene"/>
</dbReference>
<dbReference type="neXtProt" id="NX_Q9BXF3"/>
<dbReference type="OpenTargets" id="ENSG00000099954"/>
<dbReference type="PharmGKB" id="PA26383"/>
<dbReference type="VEuPathDB" id="HostDB:ENSG00000099954"/>
<dbReference type="eggNOG" id="KOG1472">
    <property type="taxonomic scope" value="Eukaryota"/>
</dbReference>
<dbReference type="GeneTree" id="ENSGT00940000160360"/>
<dbReference type="InParanoid" id="Q9BXF3"/>
<dbReference type="OrthoDB" id="303107at2759"/>
<dbReference type="PAN-GO" id="Q9BXF3">
    <property type="GO annotations" value="2 GO annotations based on evolutionary models"/>
</dbReference>
<dbReference type="PhylomeDB" id="Q9BXF3"/>
<dbReference type="TreeFam" id="TF324727"/>
<dbReference type="PathwayCommons" id="Q9BXF3"/>
<dbReference type="SignaLink" id="Q9BXF3"/>
<dbReference type="SIGNOR" id="Q9BXF3"/>
<dbReference type="BioGRID-ORCS" id="27443">
    <property type="hits" value="20 hits in 408 CRISPR screens"/>
</dbReference>
<dbReference type="ChiTaRS" id="CECR2">
    <property type="organism name" value="human"/>
</dbReference>
<dbReference type="EvolutionaryTrace" id="Q9BXF3"/>
<dbReference type="GenomeRNAi" id="27443"/>
<dbReference type="Pharos" id="Q9BXF3">
    <property type="development level" value="Tchem"/>
</dbReference>
<dbReference type="PRO" id="PR:Q9BXF3"/>
<dbReference type="Proteomes" id="UP000005640">
    <property type="component" value="Chromosome 22"/>
</dbReference>
<dbReference type="RNAct" id="Q9BXF3">
    <property type="molecule type" value="protein"/>
</dbReference>
<dbReference type="Bgee" id="ENSG00000099954">
    <property type="expression patterns" value="Expressed in tibialis anterior and 147 other cell types or tissues"/>
</dbReference>
<dbReference type="ExpressionAtlas" id="Q9BXF3">
    <property type="expression patterns" value="baseline and differential"/>
</dbReference>
<dbReference type="GO" id="GO:0090537">
    <property type="term" value="C:CERF complex"/>
    <property type="evidence" value="ECO:0000314"/>
    <property type="project" value="MGI"/>
</dbReference>
<dbReference type="GO" id="GO:0000791">
    <property type="term" value="C:euchromatin"/>
    <property type="evidence" value="ECO:0007669"/>
    <property type="project" value="Ensembl"/>
</dbReference>
<dbReference type="GO" id="GO:0005634">
    <property type="term" value="C:nucleus"/>
    <property type="evidence" value="ECO:0000314"/>
    <property type="project" value="UniProtKB"/>
</dbReference>
<dbReference type="GO" id="GO:0140658">
    <property type="term" value="F:ATP-dependent chromatin remodeler activity"/>
    <property type="evidence" value="ECO:0000314"/>
    <property type="project" value="MGI"/>
</dbReference>
<dbReference type="GO" id="GO:0006309">
    <property type="term" value="P:apoptotic DNA fragmentation"/>
    <property type="evidence" value="ECO:0000304"/>
    <property type="project" value="HGNC-UCL"/>
</dbReference>
<dbReference type="GO" id="GO:0006338">
    <property type="term" value="P:chromatin remodeling"/>
    <property type="evidence" value="ECO:0000314"/>
    <property type="project" value="ComplexPortal"/>
</dbReference>
<dbReference type="GO" id="GO:0090102">
    <property type="term" value="P:cochlea development"/>
    <property type="evidence" value="ECO:0007669"/>
    <property type="project" value="Ensembl"/>
</dbReference>
<dbReference type="GO" id="GO:0007010">
    <property type="term" value="P:cytoskeleton organization"/>
    <property type="evidence" value="ECO:0000303"/>
    <property type="project" value="UniProtKB"/>
</dbReference>
<dbReference type="GO" id="GO:0061640">
    <property type="term" value="P:cytoskeleton-dependent cytokinesis"/>
    <property type="evidence" value="ECO:0000303"/>
    <property type="project" value="UniProtKB"/>
</dbReference>
<dbReference type="GO" id="GO:0097194">
    <property type="term" value="P:execution phase of apoptosis"/>
    <property type="evidence" value="ECO:0000314"/>
    <property type="project" value="BHF-UCL"/>
</dbReference>
<dbReference type="GO" id="GO:0060122">
    <property type="term" value="P:inner ear receptor cell stereocilium organization"/>
    <property type="evidence" value="ECO:0007669"/>
    <property type="project" value="Ensembl"/>
</dbReference>
<dbReference type="GO" id="GO:0001842">
    <property type="term" value="P:neural fold formation"/>
    <property type="evidence" value="ECO:0007669"/>
    <property type="project" value="Ensembl"/>
</dbReference>
<dbReference type="GO" id="GO:0001843">
    <property type="term" value="P:neural tube closure"/>
    <property type="evidence" value="ECO:0007669"/>
    <property type="project" value="Ensembl"/>
</dbReference>
<dbReference type="GO" id="GO:0007338">
    <property type="term" value="P:single fertilization"/>
    <property type="evidence" value="ECO:0000318"/>
    <property type="project" value="GO_Central"/>
</dbReference>
<dbReference type="GO" id="GO:0016192">
    <property type="term" value="P:vesicle-mediated transport"/>
    <property type="evidence" value="ECO:0000303"/>
    <property type="project" value="UniProtKB"/>
</dbReference>
<dbReference type="CDD" id="cd05509">
    <property type="entry name" value="Bromo_gcn5_like"/>
    <property type="match status" value="1"/>
</dbReference>
<dbReference type="FunFam" id="1.20.920.10:FF:000027">
    <property type="entry name" value="Cat eye syndrome critical region protein 2"/>
    <property type="match status" value="1"/>
</dbReference>
<dbReference type="Gene3D" id="1.20.920.10">
    <property type="entry name" value="Bromodomain-like"/>
    <property type="match status" value="1"/>
</dbReference>
<dbReference type="InterPro" id="IPR001487">
    <property type="entry name" value="Bromodomain"/>
</dbReference>
<dbReference type="InterPro" id="IPR036427">
    <property type="entry name" value="Bromodomain-like_sf"/>
</dbReference>
<dbReference type="InterPro" id="IPR018359">
    <property type="entry name" value="Bromodomain_CS"/>
</dbReference>
<dbReference type="InterPro" id="IPR029614">
    <property type="entry name" value="CECR2"/>
</dbReference>
<dbReference type="PANTHER" id="PTHR47092">
    <property type="entry name" value="CAT EYE SYNDROME CRITICAL REGION PROTEIN 2"/>
    <property type="match status" value="1"/>
</dbReference>
<dbReference type="PANTHER" id="PTHR47092:SF1">
    <property type="entry name" value="CHROMATIN REMODELING REGULATOR CECR2"/>
    <property type="match status" value="1"/>
</dbReference>
<dbReference type="Pfam" id="PF00439">
    <property type="entry name" value="Bromodomain"/>
    <property type="match status" value="1"/>
</dbReference>
<dbReference type="PRINTS" id="PR00503">
    <property type="entry name" value="BROMODOMAIN"/>
</dbReference>
<dbReference type="SMART" id="SM00297">
    <property type="entry name" value="BROMO"/>
    <property type="match status" value="1"/>
</dbReference>
<dbReference type="SUPFAM" id="SSF47370">
    <property type="entry name" value="Bromodomain"/>
    <property type="match status" value="1"/>
</dbReference>
<dbReference type="PROSITE" id="PS00633">
    <property type="entry name" value="BROMODOMAIN_1"/>
    <property type="match status" value="1"/>
</dbReference>
<dbReference type="PROSITE" id="PS50014">
    <property type="entry name" value="BROMODOMAIN_2"/>
    <property type="match status" value="1"/>
</dbReference>
<accession>Q9BXF3</accession>
<accession>A8MS90</accession>
<accession>A8MX16</accession>
<accession>Q658Z4</accession>
<accession>Q96P58</accession>
<accession>Q9C0C3</accession>
<sequence>MCPEEGGAAGLGELRSWWEVPAIAHFCSLFRTAFRLPDFEIEELEAALHRDDVEFISDLIACLLQGCYQRRDITPQTFHSYLEDIINYRWELEEGKPNPLREASFQDLPLRTRVEILHRLCDYRLDADDVFDLLKGLDADSLRVEPLGEDNSGALYWYFYGTRMYKEDPVQGKSNGELSLSRESEGQKNVSSIPGKTGKRRGRPPKRKKLQEEILLSEKQEENSLASEPQTRHGSQGPGQGTWWLLCQTEEEWRQVTESFRERTSLRERQLYKLLSEDFLPEICNMIAQKGKRPQRTKAELHPRWMSDHLSIKPVKQEETPVLTRIEKQKRKEEEEERQILLAVQKKEQEQMLKEERKRELEEKVKAVEGMCSVRVVWRGACLSTSRPVDRAKRRKLREERAWLLAQGKELPPELSHLDPNSPMREEKKTKDLFELDDDFTAMYKVLDVVKAHKDSWPFLEPVDESYAPNYYQIIKAPMDISSMEKKLNGGLYCTKEEFVNDMKTMFRNCRKYNGESSEYTKMSDNLERCFHRAMMKHFPGEDGDTDEEFWIREDEKREKRRSRAGRSGGSHVWTRSRDPEGSSRKQQPMENGGKSLPPTRRAPSSGDDQSSSSTQPPREVGTSNGRGFSHPLHCGGTPSQAPFLNQMRPAVPGTFGPLRGSDPATLYGSSGVPEPHPGEPVQQRQPFTMQPPVGINSLRGPRLGTPEEKQMCGGLTHLSNMGPHPGSLQLGQISGPSQDGSMYAPAQFQPGFIPPRHGGAPARPPDFPESSEIPPSHMYRSYKYLNRVHSAVWNGNHGATNQGPLGPDEKPHLGPGPSHQPRTLGHVMDSRVMRPPVPPNQWTEQSGFLPHGVPSSGYMRPPCKSAGHRLQPPPVPAPSSLFGAPAQALRGVQGGDSMMDSPEMIAMQQLSSRVCPPGVPYHPHQPAHPRLPGPFPQVAHPMSVTVSAPKPALGNPGRAPENSEAQEPENDQAEPLPGLEEKPPGVGTSEGVYLTQLPHPTPPLQTDCTRQSSPQERETVGPELKSSSSESADNCKAMKGKNPWPSDSSYPGPAAQGCVRDLSTVADRGALSENGVIGEASPCGSEGKGLGSSGSEKLLCPRGRTLQETMPCTGQNAATPPSTDPGLTGGTVSQFPPLYMPGLEYPNSAAHYHISPGLQGVGPVMGGKSPASHPQHFPPRGFQSNHPHSGGFPRYRPPQGMRYSYHPPPQPSYHHYQRTPYYACPQSFSDWQRPLHPQGSPSGPPASQPPPPRSLFSDKNAMASLQGCETLNAALTSPTRMDAVAAKVPNDGQNPGPEEEKLDESMERPESPKEFLDLDNHNAATKRQSSLSASEYLYGTPPPLSSGMGFGSSAFPPHSVMLQTGPPYTPQRPASHFQPRAYSSPVAALPPHHPGATQPNGLSQEGPIYRCQEEGLGHFQAVMMEQIGTRSGIRGPFQEMYRPSGMQMHPVQSQASFPKTPTAATSQEEVPPHKPPTLPLDQS</sequence>
<proteinExistence type="evidence at protein level"/>
<gene>
    <name type="primary">CECR2</name>
    <name type="synonym">KIAA1740</name>
</gene>
<name>CECR2_HUMAN</name>
<comment type="function">
    <text evidence="1 6 7 8 10 11">Regulatory subunit of the ATP-dependent CERF-1 and CERF-5 ISWI chromatin remodeling complexes, which form ordered nucleosome arrays on chromatin and facilitate access to DNA during DNA-templated processes such as DNA replication, transcription, and repair (PubMed:15640247, PubMed:22464331, PubMed:26365797, PubMed:28801535). The complexes do not have the ability to slide mononucleosomes to the center of a DNA template (PubMed:28801535). The CERF-1 ISWI chromatin remodeling complex has a lower ATP hydrolysis rate than the CERF-5 ISWI chromatin remodeling complex (PubMed:28801535). Plays a role in various processes during development: required during embryogenesis for neural tube closure and inner ear development. In adults, required for spermatogenesis, via the formation of ISWI-type chromatin complexes (By similarity). In histone-modifying complexes, CECR2 recognizes and binds acylated histones: binds histones that are acetylated and/or butyrylated (PubMed:22464331, PubMed:26365797). May also be involved through its interaction with LRPPRC in the integration of cytoskeletal network with vesicular trafficking, nucleocytosolic shuttling, transcription, chromosome remodeling and cytokinesis (PubMed:11827465).</text>
</comment>
<comment type="subunit">
    <text evidence="1 6 7 8 10 11">Component of the CERF-1 ISWI chromatin remodeling complex (also called the CECR2-containing remodeling factor (CERF) complex) at least composed of CECR2 and SMARCA1 (PubMed:15640247, PubMed:28801535). Component of the CERF-5 ISWI chromatin remodeling complex at least composed of SMARCA5/SNF2H and CECR2 (PubMed:28801535). LUZP1 is detected as part of the CERF-1 and CERF-5 complexes in embryonic stem (ES) cells where it is involved in complex stabilization but is not detected in the complexes in the testis (By similarity). Interacts with CCAR2; CCAR2 may form part of the CERF-1 and/or CEF-5 ISWI chromatin remodeling complexes in ES cells (By similarity). Interacts with acetylated lysine residues on histone H2A and H3 (in vitro) (PubMed:22464331, PubMed:26365797). Interacts with LRPPRC (PubMed:11827465).</text>
</comment>
<comment type="subcellular location">
    <subcellularLocation>
        <location evidence="9">Nucleus</location>
    </subcellularLocation>
</comment>
<comment type="alternative products">
    <event type="alternative splicing"/>
    <isoform>
        <id>Q9BXF3-1</id>
        <name>A</name>
        <sequence type="displayed"/>
    </isoform>
    <isoform>
        <id>Q9BXF3-2</id>
        <name>B</name>
        <name>CECR2B</name>
        <sequence type="described" ref="VSP_000571 VSP_000572 VSP_000573"/>
    </isoform>
    <isoform>
        <id>Q9BXF3-3</id>
        <name>C</name>
        <sequence type="described" ref="VSP_020407"/>
    </isoform>
</comment>
<comment type="tissue specificity">
    <text>Highly expressed in skeletal muscle, thymus, placenta and lung. Expressed at lower level in brain, heart, colon, spleen, kidney.</text>
</comment>
<comment type="domain">
    <text evidence="8 10">The Bromo domain recognizes and binds acetylated histones (PubMed:22464331). Also recognizes and binds histones that are butyrylated (PubMed:26365797).</text>
</comment>
<comment type="miscellaneous">
    <text evidence="16">Candidate gene for the Cat Eye Syndrome (CES), a developmental disorder associated with the duplication of a 2 Mb region of 22q11.2. Duplication usually takes in the form of a surpernumerary bisatellited isodicentric chromosome, resulting in four copies of the region (represents an inv dup(22)(q11)). CES is characterized clinically by the combination of coloboma of the iris and anal atresia with fistula, downslanting palpebral fissures, preauricular tags and/or pits, frequent occurrence of heart and renal malformations, and normal or near-normal mental development.</text>
</comment>
<comment type="sequence caution" evidence="15">
    <conflict type="erroneous initiation">
        <sequence resource="EMBL-CDS" id="CAH56122"/>
    </conflict>
    <text>Truncated N-terminus.</text>
</comment>
<comment type="sequence caution" evidence="15">
    <conflict type="erroneous initiation">
        <sequence resource="EMBL-CDS" id="CAH56212"/>
    </conflict>
    <text>Truncated N-terminus.</text>
</comment>
<comment type="sequence caution" evidence="15">
    <conflict type="erroneous initiation">
        <sequence resource="EMBL-CDS" id="EAW57756"/>
    </conflict>
    <text>Truncated N-terminus.</text>
</comment>
<protein>
    <recommendedName>
        <fullName evidence="15">Chromatin remodeling regulator CECR2</fullName>
    </recommendedName>
    <alternativeName>
        <fullName>Cat eye syndrome critical region protein 2</fullName>
    </alternativeName>
</protein>
<evidence type="ECO:0000250" key="1">
    <source>
        <dbReference type="UniProtKB" id="E9Q2Z1"/>
    </source>
</evidence>
<evidence type="ECO:0000255" key="2">
    <source>
        <dbReference type="PROSITE-ProRule" id="PRU00035"/>
    </source>
</evidence>
<evidence type="ECO:0000256" key="3">
    <source>
        <dbReference type="SAM" id="MobiDB-lite"/>
    </source>
</evidence>
<evidence type="ECO:0000269" key="4">
    <source>
    </source>
</evidence>
<evidence type="ECO:0000269" key="5">
    <source>
    </source>
</evidence>
<evidence type="ECO:0000269" key="6">
    <source>
    </source>
</evidence>
<evidence type="ECO:0000269" key="7">
    <source>
    </source>
</evidence>
<evidence type="ECO:0000269" key="8">
    <source>
    </source>
</evidence>
<evidence type="ECO:0000269" key="9">
    <source>
    </source>
</evidence>
<evidence type="ECO:0000269" key="10">
    <source>
    </source>
</evidence>
<evidence type="ECO:0000269" key="11">
    <source>
    </source>
</evidence>
<evidence type="ECO:0000303" key="12">
    <source>
    </source>
</evidence>
<evidence type="ECO:0000303" key="13">
    <source>
    </source>
</evidence>
<evidence type="ECO:0000303" key="14">
    <source>
    </source>
</evidence>
<evidence type="ECO:0000305" key="15"/>
<evidence type="ECO:0000305" key="16">
    <source>
    </source>
</evidence>
<evidence type="ECO:0007744" key="17">
    <source>
    </source>
</evidence>
<evidence type="ECO:0007829" key="18">
    <source>
        <dbReference type="PDB" id="5V84"/>
    </source>
</evidence>
<evidence type="ECO:0007829" key="19">
    <source>
        <dbReference type="PDB" id="8RU1"/>
    </source>
</evidence>
<keyword id="KW-0002">3D-structure</keyword>
<keyword id="KW-0025">Alternative splicing</keyword>
<keyword id="KW-0103">Bromodomain</keyword>
<keyword id="KW-0156">Chromatin regulator</keyword>
<keyword id="KW-0488">Methylation</keyword>
<keyword id="KW-0539">Nucleus</keyword>
<keyword id="KW-0597">Phosphoprotein</keyword>
<keyword id="KW-1267">Proteomics identification</keyword>
<keyword id="KW-1185">Reference proteome</keyword>
<reference key="1">
    <citation type="journal article" date="2001" name="Genome Res.">
        <title>Analysis of the cat eye syndrome critical region in humans and the region of conserved synteny in mice: a search for candidate genes at or near the human chromosome 22 pericentromere.</title>
        <authorList>
            <person name="Footz T.K."/>
            <person name="Brinkman-Mills P."/>
            <person name="Banting G.S."/>
            <person name="Maier S.A."/>
            <person name="Riazi M.A."/>
            <person name="Bridgland L.J."/>
            <person name="Hu S."/>
            <person name="Birren B."/>
            <person name="Minoshima S."/>
            <person name="Shimizu N."/>
            <person name="Pan H."/>
            <person name="Nguyen T."/>
            <person name="Fang F."/>
            <person name="Fu Y."/>
            <person name="Ray L."/>
            <person name="Wu H."/>
            <person name="Shaull S."/>
            <person name="Phan S."/>
            <person name="Yao Z."/>
            <person name="Chen F."/>
            <person name="Huan A."/>
            <person name="Hu P."/>
            <person name="Wang Q."/>
            <person name="Loh P."/>
            <person name="Qi S."/>
            <person name="Roe B.A."/>
            <person name="McDermid H.E."/>
        </authorList>
    </citation>
    <scope>NUCLEOTIDE SEQUENCE [MRNA] (ISOFORM A)</scope>
    <scope>VARIANT LEU-674</scope>
</reference>
<reference key="2">
    <citation type="journal article" date="1999" name="Nature">
        <title>The DNA sequence of human chromosome 22.</title>
        <authorList>
            <person name="Dunham I."/>
            <person name="Hunt A.R."/>
            <person name="Collins J.E."/>
            <person name="Bruskiewich R."/>
            <person name="Beare D.M."/>
            <person name="Clamp M."/>
            <person name="Smink L.J."/>
            <person name="Ainscough R."/>
            <person name="Almeida J.P."/>
            <person name="Babbage A.K."/>
            <person name="Bagguley C."/>
            <person name="Bailey J."/>
            <person name="Barlow K.F."/>
            <person name="Bates K.N."/>
            <person name="Beasley O.P."/>
            <person name="Bird C.P."/>
            <person name="Blakey S.E."/>
            <person name="Bridgeman A.M."/>
            <person name="Buck D."/>
            <person name="Burgess J."/>
            <person name="Burrill W.D."/>
            <person name="Burton J."/>
            <person name="Carder C."/>
            <person name="Carter N.P."/>
            <person name="Chen Y."/>
            <person name="Clark G."/>
            <person name="Clegg S.M."/>
            <person name="Cobley V.E."/>
            <person name="Cole C.G."/>
            <person name="Collier R.E."/>
            <person name="Connor R."/>
            <person name="Conroy D."/>
            <person name="Corby N.R."/>
            <person name="Coville G.J."/>
            <person name="Cox A.V."/>
            <person name="Davis J."/>
            <person name="Dawson E."/>
            <person name="Dhami P.D."/>
            <person name="Dockree C."/>
            <person name="Dodsworth S.J."/>
            <person name="Durbin R.M."/>
            <person name="Ellington A.G."/>
            <person name="Evans K.L."/>
            <person name="Fey J.M."/>
            <person name="Fleming K."/>
            <person name="French L."/>
            <person name="Garner A.A."/>
            <person name="Gilbert J.G.R."/>
            <person name="Goward M.E."/>
            <person name="Grafham D.V."/>
            <person name="Griffiths M.N.D."/>
            <person name="Hall C."/>
            <person name="Hall R.E."/>
            <person name="Hall-Tamlyn G."/>
            <person name="Heathcott R.W."/>
            <person name="Ho S."/>
            <person name="Holmes S."/>
            <person name="Hunt S.E."/>
            <person name="Jones M.C."/>
            <person name="Kershaw J."/>
            <person name="Kimberley A.M."/>
            <person name="King A."/>
            <person name="Laird G.K."/>
            <person name="Langford C.F."/>
            <person name="Leversha M.A."/>
            <person name="Lloyd C."/>
            <person name="Lloyd D.M."/>
            <person name="Martyn I.D."/>
            <person name="Mashreghi-Mohammadi M."/>
            <person name="Matthews L.H."/>
            <person name="Mccann O.T."/>
            <person name="Mcclay J."/>
            <person name="Mclaren S."/>
            <person name="McMurray A.A."/>
            <person name="Milne S.A."/>
            <person name="Mortimore B.J."/>
            <person name="Odell C.N."/>
            <person name="Pavitt R."/>
            <person name="Pearce A.V."/>
            <person name="Pearson D."/>
            <person name="Phillimore B.J.C.T."/>
            <person name="Phillips S.H."/>
            <person name="Plumb R.W."/>
            <person name="Ramsay H."/>
            <person name="Ramsey Y."/>
            <person name="Rogers L."/>
            <person name="Ross M.T."/>
            <person name="Scott C.E."/>
            <person name="Sehra H.K."/>
            <person name="Skuce C.D."/>
            <person name="Smalley S."/>
            <person name="Smith M.L."/>
            <person name="Soderlund C."/>
            <person name="Spragon L."/>
            <person name="Steward C.A."/>
            <person name="Sulston J.E."/>
            <person name="Swann R.M."/>
            <person name="Vaudin M."/>
            <person name="Wall M."/>
            <person name="Wallis J.M."/>
            <person name="Whiteley M.N."/>
            <person name="Willey D.L."/>
            <person name="Williams L."/>
            <person name="Williams S.A."/>
            <person name="Williamson H."/>
            <person name="Wilmer T.E."/>
            <person name="Wilming L."/>
            <person name="Wright C.L."/>
            <person name="Hubbard T."/>
            <person name="Bentley D.R."/>
            <person name="Beck S."/>
            <person name="Rogers J."/>
            <person name="Shimizu N."/>
            <person name="Minoshima S."/>
            <person name="Kawasaki K."/>
            <person name="Sasaki T."/>
            <person name="Asakawa S."/>
            <person name="Kudoh J."/>
            <person name="Shintani A."/>
            <person name="Shibuya K."/>
            <person name="Yoshizaki Y."/>
            <person name="Aoki N."/>
            <person name="Mitsuyama S."/>
            <person name="Roe B.A."/>
            <person name="Chen F."/>
            <person name="Chu L."/>
            <person name="Crabtree J."/>
            <person name="Deschamps S."/>
            <person name="Do A."/>
            <person name="Do T."/>
            <person name="Dorman A."/>
            <person name="Fang F."/>
            <person name="Fu Y."/>
            <person name="Hu P."/>
            <person name="Hua A."/>
            <person name="Kenton S."/>
            <person name="Lai H."/>
            <person name="Lao H.I."/>
            <person name="Lewis J."/>
            <person name="Lewis S."/>
            <person name="Lin S.-P."/>
            <person name="Loh P."/>
            <person name="Malaj E."/>
            <person name="Nguyen T."/>
            <person name="Pan H."/>
            <person name="Phan S."/>
            <person name="Qi S."/>
            <person name="Qian Y."/>
            <person name="Ray L."/>
            <person name="Ren Q."/>
            <person name="Shaull S."/>
            <person name="Sloan D."/>
            <person name="Song L."/>
            <person name="Wang Q."/>
            <person name="Wang Y."/>
            <person name="Wang Z."/>
            <person name="White J."/>
            <person name="Willingham D."/>
            <person name="Wu H."/>
            <person name="Yao Z."/>
            <person name="Zhan M."/>
            <person name="Zhang G."/>
            <person name="Chissoe S."/>
            <person name="Murray J."/>
            <person name="Miller N."/>
            <person name="Minx P."/>
            <person name="Fulton R."/>
            <person name="Johnson D."/>
            <person name="Bemis G."/>
            <person name="Bentley D."/>
            <person name="Bradshaw H."/>
            <person name="Bourne S."/>
            <person name="Cordes M."/>
            <person name="Du Z."/>
            <person name="Fulton L."/>
            <person name="Goela D."/>
            <person name="Graves T."/>
            <person name="Hawkins J."/>
            <person name="Hinds K."/>
            <person name="Kemp K."/>
            <person name="Latreille P."/>
            <person name="Layman D."/>
            <person name="Ozersky P."/>
            <person name="Rohlfing T."/>
            <person name="Scheet P."/>
            <person name="Walker C."/>
            <person name="Wamsley A."/>
            <person name="Wohldmann P."/>
            <person name="Pepin K."/>
            <person name="Nelson J."/>
            <person name="Korf I."/>
            <person name="Bedell J.A."/>
            <person name="Hillier L.W."/>
            <person name="Mardis E."/>
            <person name="Waterston R."/>
            <person name="Wilson R."/>
            <person name="Emanuel B.S."/>
            <person name="Shaikh T."/>
            <person name="Kurahashi H."/>
            <person name="Saitta S."/>
            <person name="Budarf M.L."/>
            <person name="McDermid H.E."/>
            <person name="Johnson A."/>
            <person name="Wong A.C.C."/>
            <person name="Morrow B.E."/>
            <person name="Edelmann L."/>
            <person name="Kim U.J."/>
            <person name="Shizuya H."/>
            <person name="Simon M.I."/>
            <person name="Dumanski J.P."/>
            <person name="Peyrard M."/>
            <person name="Kedra D."/>
            <person name="Seroussi E."/>
            <person name="Fransson I."/>
            <person name="Tapia I."/>
            <person name="Bruder C.E."/>
            <person name="O'Brien K.P."/>
            <person name="Wilkinson P."/>
            <person name="Bodenteich A."/>
            <person name="Hartman K."/>
            <person name="Hu X."/>
            <person name="Khan A.S."/>
            <person name="Lane L."/>
            <person name="Tilahun Y."/>
            <person name="Wright H."/>
        </authorList>
    </citation>
    <scope>NUCLEOTIDE SEQUENCE [LARGE SCALE GENOMIC DNA]</scope>
</reference>
<reference key="3">
    <citation type="submission" date="2005-07" db="EMBL/GenBank/DDBJ databases">
        <authorList>
            <person name="Mural R.J."/>
            <person name="Istrail S."/>
            <person name="Sutton G.G."/>
            <person name="Florea L."/>
            <person name="Halpern A.L."/>
            <person name="Mobarry C.M."/>
            <person name="Lippert R."/>
            <person name="Walenz B."/>
            <person name="Shatkay H."/>
            <person name="Dew I."/>
            <person name="Miller J.R."/>
            <person name="Flanigan M.J."/>
            <person name="Edwards N.J."/>
            <person name="Bolanos R."/>
            <person name="Fasulo D."/>
            <person name="Halldorsson B.V."/>
            <person name="Hannenhalli S."/>
            <person name="Turner R."/>
            <person name="Yooseph S."/>
            <person name="Lu F."/>
            <person name="Nusskern D.R."/>
            <person name="Shue B.C."/>
            <person name="Zheng X.H."/>
            <person name="Zhong F."/>
            <person name="Delcher A.L."/>
            <person name="Huson D.H."/>
            <person name="Kravitz S.A."/>
            <person name="Mouchard L."/>
            <person name="Reinert K."/>
            <person name="Remington K.A."/>
            <person name="Clark A.G."/>
            <person name="Waterman M.S."/>
            <person name="Eichler E.E."/>
            <person name="Adams M.D."/>
            <person name="Hunkapiller M.W."/>
            <person name="Myers E.W."/>
            <person name="Venter J.C."/>
        </authorList>
    </citation>
    <scope>NUCLEOTIDE SEQUENCE [LARGE SCALE GENOMIC DNA]</scope>
</reference>
<reference key="4">
    <citation type="journal article" date="2007" name="BMC Genomics">
        <title>The full-ORF clone resource of the German cDNA consortium.</title>
        <authorList>
            <person name="Bechtel S."/>
            <person name="Rosenfelder H."/>
            <person name="Duda A."/>
            <person name="Schmidt C.P."/>
            <person name="Ernst U."/>
            <person name="Wellenreuther R."/>
            <person name="Mehrle A."/>
            <person name="Schuster C."/>
            <person name="Bahr A."/>
            <person name="Bloecker H."/>
            <person name="Heubner D."/>
            <person name="Hoerlein A."/>
            <person name="Michel G."/>
            <person name="Wedler H."/>
            <person name="Koehrer K."/>
            <person name="Ottenwaelder B."/>
            <person name="Poustka A."/>
            <person name="Wiemann S."/>
            <person name="Schupp I."/>
        </authorList>
    </citation>
    <scope>NUCLEOTIDE SEQUENCE [LARGE SCALE MRNA] OF 36-1484 (ISOFORM C)</scope>
    <source>
        <tissue>Skeletal muscle</tissue>
    </source>
</reference>
<reference key="5">
    <citation type="journal article" date="2000" name="DNA Res.">
        <title>Prediction of the coding sequences of unidentified human genes. XIX. The complete sequences of 100 new cDNA clones from brain which code for large proteins in vitro.</title>
        <authorList>
            <person name="Nagase T."/>
            <person name="Kikuno R."/>
            <person name="Hattori A."/>
            <person name="Kondo Y."/>
            <person name="Okumura K."/>
            <person name="Ohara O."/>
        </authorList>
    </citation>
    <scope>NUCLEOTIDE SEQUENCE [LARGE SCALE MRNA] OF 346-1484 (ISOFORM C)</scope>
    <scope>VARIANT LEU-674</scope>
    <source>
        <tissue>Brain</tissue>
    </source>
</reference>
<reference key="6">
    <citation type="journal article" date="2002" name="Genomics">
        <title>Sequence analysis of LRPPRC and its SEC1 domain interaction partners suggests roles in cytoskeletal organization, vesicular trafficking, nucleocytosolic shuttling, and chromosome activity.</title>
        <authorList>
            <person name="Liu L."/>
            <person name="McKeehan W.L."/>
        </authorList>
    </citation>
    <scope>NUCLEOTIDE SEQUENCE [MRNA] OF 168-1484 (ISOFORM B)</scope>
    <scope>FUNCTION</scope>
    <scope>INTERACTION WITH LRPPRC</scope>
    <source>
        <tissue>Liver</tissue>
    </source>
</reference>
<reference key="7">
    <citation type="journal article" date="2005" name="Hum. Mol. Genet.">
        <title>CECR2, a protein involved in neurulation, forms a novel chromatin remodeling complex with SNF2L.</title>
        <authorList>
            <person name="Banting G.S."/>
            <person name="Barak O."/>
            <person name="Ames T.M."/>
            <person name="Burnham A.C."/>
            <person name="Kardel M.D."/>
            <person name="Cooch N.S."/>
            <person name="Davidson C.E."/>
            <person name="Godbout R."/>
            <person name="McDermid H.E."/>
            <person name="Shiekhattar R."/>
        </authorList>
    </citation>
    <scope>FUNCTION</scope>
    <scope>IDENTIFICATION IN THE CERF COMPLEX</scope>
    <scope>IDENTIFICATION BY MASS SPECTROMETRY</scope>
</reference>
<reference key="8">
    <citation type="journal article" date="2011" name="Sci. Signal.">
        <title>System-wide temporal characterization of the proteome and phosphoproteome of human embryonic stem cell differentiation.</title>
        <authorList>
            <person name="Rigbolt K.T."/>
            <person name="Prokhorova T.A."/>
            <person name="Akimov V."/>
            <person name="Henningsen J."/>
            <person name="Johansen P.T."/>
            <person name="Kratchmarova I."/>
            <person name="Kassem M."/>
            <person name="Mann M."/>
            <person name="Olsen J.V."/>
            <person name="Blagoev B."/>
        </authorList>
    </citation>
    <scope>PHOSPHORYLATION [LARGE SCALE ANALYSIS] AT SER-422; THR-546; SER-571; SER-1014 AND SER-1312</scope>
    <scope>METHYLATION AT ARG-1197 AND ARG-1203</scope>
    <scope>IDENTIFICATION BY MASS SPECTROMETRY [LARGE SCALE ANALYSIS]</scope>
</reference>
<reference key="9">
    <citation type="journal article" date="2015" name="Genes Dev.">
        <title>Screen identifies bromodomain protein ZMYND8 in chromatin recognition of transcription-associated DNA damage that promotes homologous recombination.</title>
        <authorList>
            <person name="Gong F."/>
            <person name="Chiu L.Y."/>
            <person name="Cox B."/>
            <person name="Aymard F."/>
            <person name="Clouaire T."/>
            <person name="Leung J.W."/>
            <person name="Cammarata M."/>
            <person name="Perez M."/>
            <person name="Agarwal P."/>
            <person name="Brodbelt J.S."/>
            <person name="Legube G."/>
            <person name="Miller K.M."/>
        </authorList>
    </citation>
    <scope>SUBCELLULAR LOCATION</scope>
</reference>
<reference key="10">
    <citation type="journal article" date="2015" name="Structure">
        <title>A subset of human bromodomains recognizes butyryllysine and crotonyllysine histone peptide modifications.</title>
        <authorList>
            <person name="Flynn E.M."/>
            <person name="Huang O.W."/>
            <person name="Poy F."/>
            <person name="Oppikofer M."/>
            <person name="Bellon S.F."/>
            <person name="Tang Y."/>
            <person name="Cochran A.G."/>
        </authorList>
    </citation>
    <scope>FUNCTION</scope>
    <scope>DOMAIN</scope>
</reference>
<reference key="11">
    <citation type="journal article" date="2017" name="EMBO Rep.">
        <title>Expansion of the ISWI chromatin remodeler family with new active complexes.</title>
        <authorList>
            <person name="Oppikofer M."/>
            <person name="Bai T."/>
            <person name="Gan Y."/>
            <person name="Haley B."/>
            <person name="Liu P."/>
            <person name="Sandoval W."/>
            <person name="Ciferri C."/>
            <person name="Cochran A.G."/>
        </authorList>
    </citation>
    <scope>FUNCTION</scope>
    <scope>IDENTIFICATION IN THE CERF-1 ISWI CHROMATIN REMODELING COMPLEX</scope>
    <scope>IDENTIFICATION IN THE CERF-5 CHROMATIN REMODELING COMPLEX</scope>
    <scope>INTERACTION WITH SMARCA1 AND SMARCA5</scope>
</reference>
<reference key="12">
    <citation type="journal article" date="2012" name="Cell">
        <title>Histone recognition and large-scale structural analysis of the human bromodomain family.</title>
        <authorList>
            <person name="Filippakopoulos P."/>
            <person name="Picaud S."/>
            <person name="Mangos M."/>
            <person name="Keates T."/>
            <person name="Lambert J.P."/>
            <person name="Barsyte-Lovejoy D."/>
            <person name="Felletar I."/>
            <person name="Volkmer R."/>
            <person name="Muller S."/>
            <person name="Pawson T."/>
            <person name="Gingras A.C."/>
            <person name="Arrowsmith C.H."/>
            <person name="Knapp S."/>
        </authorList>
    </citation>
    <scope>X-RAY CRYSTALLOGRAPHY (1.83 ANGSTROMS) OF 424-538</scope>
    <scope>FUNCTION</scope>
    <scope>DOMAIN</scope>
    <scope>SUBUNIT</scope>
</reference>
<feature type="chain" id="PRO_0000211192" description="Chromatin remodeling regulator CECR2">
    <location>
        <begin position="1"/>
        <end position="1484"/>
    </location>
</feature>
<feature type="domain" description="Bromo" evidence="2">
    <location>
        <begin position="434"/>
        <end position="538"/>
    </location>
</feature>
<feature type="region of interest" description="Disordered" evidence="3">
    <location>
        <begin position="170"/>
        <end position="241"/>
    </location>
</feature>
<feature type="region of interest" description="Disordered" evidence="3">
    <location>
        <begin position="556"/>
        <end position="704"/>
    </location>
</feature>
<feature type="region of interest" description="Disordered" evidence="3">
    <location>
        <begin position="796"/>
        <end position="825"/>
    </location>
</feature>
<feature type="region of interest" description="Disordered" evidence="3">
    <location>
        <begin position="919"/>
        <end position="1053"/>
    </location>
</feature>
<feature type="region of interest" description="Disordered" evidence="3">
    <location>
        <begin position="1165"/>
        <end position="1259"/>
    </location>
</feature>
<feature type="region of interest" description="Disordered" evidence="3">
    <location>
        <begin position="1287"/>
        <end position="1320"/>
    </location>
</feature>
<feature type="region of interest" description="Disordered" evidence="3">
    <location>
        <begin position="1442"/>
        <end position="1484"/>
    </location>
</feature>
<feature type="compositionally biased region" description="Basic residues" evidence="3">
    <location>
        <begin position="197"/>
        <end position="209"/>
    </location>
</feature>
<feature type="compositionally biased region" description="Basic and acidic residues" evidence="3">
    <location>
        <begin position="210"/>
        <end position="222"/>
    </location>
</feature>
<feature type="compositionally biased region" description="Polar residues" evidence="3">
    <location>
        <begin position="223"/>
        <end position="234"/>
    </location>
</feature>
<feature type="compositionally biased region" description="Low complexity" evidence="3">
    <location>
        <begin position="605"/>
        <end position="614"/>
    </location>
</feature>
<feature type="compositionally biased region" description="Pro residues" evidence="3">
    <location>
        <begin position="1243"/>
        <end position="1254"/>
    </location>
</feature>
<feature type="compositionally biased region" description="Basic and acidic residues" evidence="3">
    <location>
        <begin position="1304"/>
        <end position="1320"/>
    </location>
</feature>
<feature type="compositionally biased region" description="Polar residues" evidence="3">
    <location>
        <begin position="1451"/>
        <end position="1469"/>
    </location>
</feature>
<feature type="compositionally biased region" description="Pro residues" evidence="3">
    <location>
        <begin position="1474"/>
        <end position="1484"/>
    </location>
</feature>
<feature type="modified residue" description="Phosphoserine" evidence="17">
    <location>
        <position position="422"/>
    </location>
</feature>
<feature type="modified residue" description="Phosphothreonine" evidence="17">
    <location>
        <position position="546"/>
    </location>
</feature>
<feature type="modified residue" description="Phosphoserine" evidence="17">
    <location>
        <position position="571"/>
    </location>
</feature>
<feature type="modified residue" description="Phosphoserine" evidence="17">
    <location>
        <position position="1014"/>
    </location>
</feature>
<feature type="modified residue" description="Asymmetric dimethylarginine" evidence="1">
    <location>
        <position position="1197"/>
    </location>
</feature>
<feature type="modified residue" description="Asymmetric dimethylarginine" evidence="1">
    <location>
        <position position="1203"/>
    </location>
</feature>
<feature type="modified residue" description="Phosphoserine" evidence="17">
    <location>
        <position position="1312"/>
    </location>
</feature>
<feature type="splice variant" id="VSP_000571" description="In isoform B." evidence="13">
    <location>
        <begin position="291"/>
        <end position="318"/>
    </location>
</feature>
<feature type="splice variant" id="VSP_020407" description="In isoform C." evidence="12 14">
    <location>
        <begin position="370"/>
        <end position="389"/>
    </location>
</feature>
<feature type="splice variant" id="VSP_000572" description="In isoform B." evidence="13">
    <original>EYTKMSDN</original>
    <variation>GKQGRSLC</variation>
    <location>
        <begin position="519"/>
        <end position="526"/>
    </location>
</feature>
<feature type="splice variant" id="VSP_000573" description="In isoform B." evidence="13">
    <location>
        <begin position="527"/>
        <end position="1484"/>
    </location>
</feature>
<feature type="sequence variant" id="VAR_027411" description="In dbSNP:rs5747211.">
    <original>R</original>
    <variation>H</variation>
    <location>
        <position position="293"/>
    </location>
</feature>
<feature type="sequence variant" id="VAR_027412" description="In dbSNP:rs1296794." evidence="4 5">
    <original>P</original>
    <variation>L</variation>
    <location>
        <position position="674"/>
    </location>
</feature>
<feature type="sequence conflict" description="In Ref. 4; CAH56122/CAH56212." evidence="15" ref="4">
    <original>M</original>
    <variation>I</variation>
    <location>
        <position position="352"/>
    </location>
</feature>
<feature type="sequence conflict" description="In Ref. 1; AAK15343." evidence="15" ref="1">
    <original>S</original>
    <variation>C</variation>
    <location>
        <position position="1029"/>
    </location>
</feature>
<feature type="sequence conflict" description="In Ref. 1; AAK15343." evidence="15" ref="1">
    <original>W</original>
    <variation>R</variation>
    <location>
        <position position="1045"/>
    </location>
</feature>
<feature type="sequence conflict" description="In Ref. 4; CAH56122/CAH56212." evidence="15" ref="4">
    <original>M</original>
    <variation>T</variation>
    <location>
        <position position="1441"/>
    </location>
</feature>
<feature type="helix" evidence="19">
    <location>
        <begin position="439"/>
        <end position="452"/>
    </location>
</feature>
<feature type="helix" evidence="19">
    <location>
        <begin position="457"/>
        <end position="459"/>
    </location>
</feature>
<feature type="strand" evidence="18">
    <location>
        <begin position="460"/>
        <end position="462"/>
    </location>
</feature>
<feature type="helix" evidence="19">
    <location>
        <begin position="465"/>
        <end position="467"/>
    </location>
</feature>
<feature type="helix" evidence="19">
    <location>
        <begin position="471"/>
        <end position="474"/>
    </location>
</feature>
<feature type="helix" evidence="19">
    <location>
        <begin position="481"/>
        <end position="489"/>
    </location>
</feature>
<feature type="helix" evidence="19">
    <location>
        <begin position="496"/>
        <end position="514"/>
    </location>
</feature>
<feature type="helix" evidence="19">
    <location>
        <begin position="519"/>
        <end position="538"/>
    </location>
</feature>
<organism>
    <name type="scientific">Homo sapiens</name>
    <name type="common">Human</name>
    <dbReference type="NCBI Taxonomy" id="9606"/>
    <lineage>
        <taxon>Eukaryota</taxon>
        <taxon>Metazoa</taxon>
        <taxon>Chordata</taxon>
        <taxon>Craniata</taxon>
        <taxon>Vertebrata</taxon>
        <taxon>Euteleostomi</taxon>
        <taxon>Mammalia</taxon>
        <taxon>Eutheria</taxon>
        <taxon>Euarchontoglires</taxon>
        <taxon>Primates</taxon>
        <taxon>Haplorrhini</taxon>
        <taxon>Catarrhini</taxon>
        <taxon>Hominidae</taxon>
        <taxon>Homo</taxon>
    </lineage>
</organism>